<evidence type="ECO:0000255" key="1">
    <source>
        <dbReference type="HAMAP-Rule" id="MF_01128"/>
    </source>
</evidence>
<organism>
    <name type="scientific">Salmonella choleraesuis (strain SC-B67)</name>
    <dbReference type="NCBI Taxonomy" id="321314"/>
    <lineage>
        <taxon>Bacteria</taxon>
        <taxon>Pseudomonadati</taxon>
        <taxon>Pseudomonadota</taxon>
        <taxon>Gammaproteobacteria</taxon>
        <taxon>Enterobacterales</taxon>
        <taxon>Enterobacteriaceae</taxon>
        <taxon>Salmonella</taxon>
    </lineage>
</organism>
<sequence>MKTDTSTFLAQQIVRLRRRDQIRRLMQRDKTPLAILFMAAVVGTLTGLVGVAFEKAVSWVQNMRIGALVQVADHAFLLWPLAFILSALLAMVGYFLVRKFAPEAGGSGIPEIEGALEELRPVRWWRVLPVKFIGGMGTLGAGMVLGREGPTVQIGGNLGRMVLDVFRMRSAEARHTLLATGAAAGLSAAFNAPLAGILFIIEEMRPQFRYNLISIKAVFTGVIMSSIVFRIFNGEAPIIEVGKLSDAPVNTLWLYLILGIIFGCVGPVFNSLVLRTQDMFQRFHGGEIKKWVLMGGAIGGLCGILGLIEPEAAGGGFNLIPIAAAGNFSVGLLLFIFITRVVTTLLCFSSGAPGGIFAPMLALGTLLGTAFGMAAAVLFPQYHLEAGTFAIAGMGALMAASVRAPLTGIVLVLEMTDNYQLILPMIITCLGATLLAQFLGGKPLYSTILARTLAKQDAEQAAKNQNASAGENT</sequence>
<reference key="1">
    <citation type="journal article" date="2005" name="Nucleic Acids Res.">
        <title>The genome sequence of Salmonella enterica serovar Choleraesuis, a highly invasive and resistant zoonotic pathogen.</title>
        <authorList>
            <person name="Chiu C.-H."/>
            <person name="Tang P."/>
            <person name="Chu C."/>
            <person name="Hu S."/>
            <person name="Bao Q."/>
            <person name="Yu J."/>
            <person name="Chou Y.-Y."/>
            <person name="Wang H.-S."/>
            <person name="Lee Y.-S."/>
        </authorList>
    </citation>
    <scope>NUCLEOTIDE SEQUENCE [LARGE SCALE GENOMIC DNA]</scope>
    <source>
        <strain>SC-B67</strain>
    </source>
</reference>
<feature type="chain" id="PRO_0000301541" description="H(+)/Cl(-) exchange transporter ClcA">
    <location>
        <begin position="1"/>
        <end position="473"/>
    </location>
</feature>
<feature type="topological domain" description="Cytoplasmic" evidence="1">
    <location>
        <begin position="1"/>
        <end position="32"/>
    </location>
</feature>
<feature type="transmembrane region" description="Helical" evidence="1">
    <location>
        <begin position="33"/>
        <end position="69"/>
    </location>
</feature>
<feature type="topological domain" description="Periplasmic" evidence="1">
    <location>
        <begin position="70"/>
        <end position="76"/>
    </location>
</feature>
<feature type="transmembrane region" description="Helical" evidence="1">
    <location>
        <begin position="77"/>
        <end position="100"/>
    </location>
</feature>
<feature type="intramembrane region" description="Helical" evidence="1">
    <location>
        <begin position="109"/>
        <end position="116"/>
    </location>
</feature>
<feature type="topological domain" description="Cytoplasmic" evidence="1">
    <location>
        <begin position="117"/>
        <end position="123"/>
    </location>
</feature>
<feature type="transmembrane region" description="Helical" evidence="1">
    <location>
        <begin position="124"/>
        <end position="141"/>
    </location>
</feature>
<feature type="transmembrane region" description="Helical" evidence="1">
    <location>
        <begin position="148"/>
        <end position="166"/>
    </location>
</feature>
<feature type="topological domain" description="Cytoplasmic" evidence="1">
    <location>
        <begin position="167"/>
        <end position="176"/>
    </location>
</feature>
<feature type="intramembrane region" description="Helical" evidence="1">
    <location>
        <begin position="177"/>
        <end position="189"/>
    </location>
</feature>
<feature type="intramembrane region" description="Helical" evidence="1">
    <location>
        <begin position="193"/>
        <end position="201"/>
    </location>
</feature>
<feature type="topological domain" description="Cytoplasmic" evidence="1">
    <location>
        <begin position="202"/>
        <end position="214"/>
    </location>
</feature>
<feature type="transmembrane region" description="Helical" evidence="1">
    <location>
        <begin position="215"/>
        <end position="232"/>
    </location>
</feature>
<feature type="topological domain" description="Periplasmic" evidence="1">
    <location>
        <begin position="233"/>
        <end position="252"/>
    </location>
</feature>
<feature type="transmembrane region" description="Helical" evidence="1">
    <location>
        <begin position="253"/>
        <end position="281"/>
    </location>
</feature>
<feature type="topological domain" description="Cytoplasmic" evidence="1">
    <location>
        <begin position="282"/>
        <end position="287"/>
    </location>
</feature>
<feature type="transmembrane region" description="Helical" evidence="1">
    <location>
        <begin position="288"/>
        <end position="309"/>
    </location>
</feature>
<feature type="topological domain" description="Periplasmic" evidence="1">
    <location>
        <begin position="310"/>
        <end position="329"/>
    </location>
</feature>
<feature type="transmembrane region" description="Helical" evidence="1">
    <location>
        <begin position="330"/>
        <end position="349"/>
    </location>
</feature>
<feature type="transmembrane region" description="Helical" evidence="1">
    <location>
        <begin position="355"/>
        <end position="376"/>
    </location>
</feature>
<feature type="topological domain" description="Periplasmic" evidence="1">
    <location>
        <begin position="377"/>
        <end position="386"/>
    </location>
</feature>
<feature type="intramembrane region" description="Helical" evidence="1">
    <location>
        <begin position="387"/>
        <end position="401"/>
    </location>
</feature>
<feature type="intramembrane region" description="Note=Loop between two helices" evidence="1">
    <location>
        <begin position="402"/>
        <end position="404"/>
    </location>
</feature>
<feature type="intramembrane region" description="Helical" evidence="1">
    <location>
        <begin position="405"/>
        <end position="416"/>
    </location>
</feature>
<feature type="intramembrane region" description="Note=Loop between two helices" evidence="1">
    <location>
        <begin position="417"/>
        <end position="421"/>
    </location>
</feature>
<feature type="transmembrane region" description="Helical" evidence="1">
    <location>
        <begin position="422"/>
        <end position="438"/>
    </location>
</feature>
<feature type="topological domain" description="Cytoplasmic" evidence="1">
    <location>
        <begin position="439"/>
        <end position="473"/>
    </location>
</feature>
<feature type="short sequence motif" description="Selectivity filter part_1" evidence="1">
    <location>
        <begin position="106"/>
        <end position="110"/>
    </location>
</feature>
<feature type="short sequence motif" description="Selectivity filter part_2" evidence="1">
    <location>
        <begin position="146"/>
        <end position="150"/>
    </location>
</feature>
<feature type="short sequence motif" description="Selectivity filter part_3" evidence="1">
    <location>
        <begin position="355"/>
        <end position="359"/>
    </location>
</feature>
<feature type="binding site" evidence="1">
    <location>
        <position position="107"/>
    </location>
    <ligand>
        <name>chloride</name>
        <dbReference type="ChEBI" id="CHEBI:17996"/>
    </ligand>
</feature>
<feature type="binding site" evidence="1">
    <location>
        <position position="356"/>
    </location>
    <ligand>
        <name>chloride</name>
        <dbReference type="ChEBI" id="CHEBI:17996"/>
    </ligand>
</feature>
<feature type="binding site" evidence="1">
    <location>
        <position position="357"/>
    </location>
    <ligand>
        <name>chloride</name>
        <dbReference type="ChEBI" id="CHEBI:17996"/>
    </ligand>
</feature>
<feature type="binding site" evidence="1">
    <location>
        <position position="445"/>
    </location>
    <ligand>
        <name>chloride</name>
        <dbReference type="ChEBI" id="CHEBI:17996"/>
    </ligand>
</feature>
<feature type="site" description="Mediates proton transfer from the outer aqueous phase to the interior of the protein; involved in linking H(+) and Cl(-) transport" evidence="1">
    <location>
        <position position="148"/>
    </location>
</feature>
<feature type="site" description="Mediates proton transfer from the protein to the inner aqueous phase" evidence="1">
    <location>
        <position position="203"/>
    </location>
</feature>
<gene>
    <name evidence="1" type="primary">clcA</name>
    <name evidence="1" type="synonym">eriC</name>
    <name type="ordered locus">SCH_0203</name>
</gene>
<keyword id="KW-0050">Antiport</keyword>
<keyword id="KW-0997">Cell inner membrane</keyword>
<keyword id="KW-1003">Cell membrane</keyword>
<keyword id="KW-0868">Chloride</keyword>
<keyword id="KW-0406">Ion transport</keyword>
<keyword id="KW-0472">Membrane</keyword>
<keyword id="KW-0812">Transmembrane</keyword>
<keyword id="KW-1133">Transmembrane helix</keyword>
<keyword id="KW-0813">Transport</keyword>
<protein>
    <recommendedName>
        <fullName evidence="1">H(+)/Cl(-) exchange transporter ClcA</fullName>
    </recommendedName>
</protein>
<name>CLCA_SALCH</name>
<comment type="function">
    <text evidence="1">Proton-coupled chloride transporter. Functions as antiport system and exchanges two chloride ions for 1 proton. Probably acts as an electrical shunt for an outwardly-directed proton pump that is linked to amino acid decarboxylation, as part of the extreme acid resistance (XAR) response.</text>
</comment>
<comment type="catalytic activity">
    <reaction evidence="1">
        <text>2 chloride(in) + H(+)(out) = 2 chloride(out) + H(+)(in)</text>
        <dbReference type="Rhea" id="RHEA:29567"/>
        <dbReference type="ChEBI" id="CHEBI:15378"/>
        <dbReference type="ChEBI" id="CHEBI:17996"/>
    </reaction>
</comment>
<comment type="subunit">
    <text evidence="1">Homodimer.</text>
</comment>
<comment type="subcellular location">
    <subcellularLocation>
        <location evidence="1">Cell inner membrane</location>
        <topology evidence="1">Multi-pass membrane protein</topology>
    </subcellularLocation>
</comment>
<comment type="similarity">
    <text evidence="1">Belongs to the chloride channel (TC 2.A.49) family. ClcA subfamily.</text>
</comment>
<proteinExistence type="inferred from homology"/>
<dbReference type="EMBL" id="AE017220">
    <property type="protein sequence ID" value="AAX64109.1"/>
    <property type="molecule type" value="Genomic_DNA"/>
</dbReference>
<dbReference type="RefSeq" id="WP_000845431.1">
    <property type="nucleotide sequence ID" value="NC_006905.1"/>
</dbReference>
<dbReference type="SMR" id="Q57T52"/>
<dbReference type="KEGG" id="sec:SCH_0203"/>
<dbReference type="HOGENOM" id="CLU_015263_7_0_6"/>
<dbReference type="Proteomes" id="UP000000538">
    <property type="component" value="Chromosome"/>
</dbReference>
<dbReference type="GO" id="GO:0005886">
    <property type="term" value="C:plasma membrane"/>
    <property type="evidence" value="ECO:0007669"/>
    <property type="project" value="UniProtKB-SubCell"/>
</dbReference>
<dbReference type="GO" id="GO:0015297">
    <property type="term" value="F:antiporter activity"/>
    <property type="evidence" value="ECO:0007669"/>
    <property type="project" value="UniProtKB-UniRule"/>
</dbReference>
<dbReference type="GO" id="GO:0005247">
    <property type="term" value="F:voltage-gated chloride channel activity"/>
    <property type="evidence" value="ECO:0007669"/>
    <property type="project" value="TreeGrafter"/>
</dbReference>
<dbReference type="CDD" id="cd01031">
    <property type="entry name" value="EriC"/>
    <property type="match status" value="1"/>
</dbReference>
<dbReference type="FunFam" id="1.10.3080.10:FF:000005">
    <property type="entry name" value="H(+)/Cl(-) exchange transporter ClcA"/>
    <property type="match status" value="1"/>
</dbReference>
<dbReference type="Gene3D" id="1.10.3080.10">
    <property type="entry name" value="Clc chloride channel"/>
    <property type="match status" value="1"/>
</dbReference>
<dbReference type="HAMAP" id="MF_01128">
    <property type="entry name" value="CLC_ClcA"/>
    <property type="match status" value="1"/>
</dbReference>
<dbReference type="InterPro" id="IPR023861">
    <property type="entry name" value="Cl-channel_ClcA"/>
</dbReference>
<dbReference type="InterPro" id="IPR014743">
    <property type="entry name" value="Cl-channel_core"/>
</dbReference>
<dbReference type="InterPro" id="IPR001807">
    <property type="entry name" value="ClC"/>
</dbReference>
<dbReference type="NCBIfam" id="NF003640">
    <property type="entry name" value="PRK05277.1"/>
    <property type="match status" value="1"/>
</dbReference>
<dbReference type="PANTHER" id="PTHR45711">
    <property type="entry name" value="CHLORIDE CHANNEL PROTEIN"/>
    <property type="match status" value="1"/>
</dbReference>
<dbReference type="PANTHER" id="PTHR45711:SF6">
    <property type="entry name" value="CHLORIDE CHANNEL PROTEIN"/>
    <property type="match status" value="1"/>
</dbReference>
<dbReference type="Pfam" id="PF00654">
    <property type="entry name" value="Voltage_CLC"/>
    <property type="match status" value="1"/>
</dbReference>
<dbReference type="PRINTS" id="PR00762">
    <property type="entry name" value="CLCHANNEL"/>
</dbReference>
<dbReference type="SUPFAM" id="SSF81340">
    <property type="entry name" value="Clc chloride channel"/>
    <property type="match status" value="1"/>
</dbReference>
<accession>Q57T52</accession>